<comment type="function">
    <text evidence="1">Tetrapolymerization of the monopyrrole PBG into the hydroxymethylbilane pre-uroporphyrinogen in several discrete steps.</text>
</comment>
<comment type="catalytic activity">
    <reaction evidence="1">
        <text>4 porphobilinogen + H2O = hydroxymethylbilane + 4 NH4(+)</text>
        <dbReference type="Rhea" id="RHEA:13185"/>
        <dbReference type="ChEBI" id="CHEBI:15377"/>
        <dbReference type="ChEBI" id="CHEBI:28938"/>
        <dbReference type="ChEBI" id="CHEBI:57845"/>
        <dbReference type="ChEBI" id="CHEBI:58126"/>
        <dbReference type="EC" id="2.5.1.61"/>
    </reaction>
</comment>
<comment type="cofactor">
    <cofactor evidence="1">
        <name>dipyrromethane</name>
        <dbReference type="ChEBI" id="CHEBI:60342"/>
    </cofactor>
    <text evidence="1">Binds 1 dipyrromethane group covalently.</text>
</comment>
<comment type="pathway">
    <text evidence="1">Porphyrin-containing compound metabolism; protoporphyrin-IX biosynthesis; coproporphyrinogen-III from 5-aminolevulinate: step 2/4.</text>
</comment>
<comment type="subunit">
    <text evidence="1">Monomer.</text>
</comment>
<comment type="miscellaneous">
    <text evidence="1">The porphobilinogen subunits are added to the dipyrromethane group.</text>
</comment>
<comment type="similarity">
    <text evidence="1">Belongs to the HMBS family.</text>
</comment>
<reference key="1">
    <citation type="journal article" date="2003" name="Proc. Natl. Acad. Sci. U.S.A.">
        <title>Complete genome sequence of the Q-fever pathogen, Coxiella burnetii.</title>
        <authorList>
            <person name="Seshadri R."/>
            <person name="Paulsen I.T."/>
            <person name="Eisen J.A."/>
            <person name="Read T.D."/>
            <person name="Nelson K.E."/>
            <person name="Nelson W.C."/>
            <person name="Ward N.L."/>
            <person name="Tettelin H."/>
            <person name="Davidsen T.M."/>
            <person name="Beanan M.J."/>
            <person name="DeBoy R.T."/>
            <person name="Daugherty S.C."/>
            <person name="Brinkac L.M."/>
            <person name="Madupu R."/>
            <person name="Dodson R.J."/>
            <person name="Khouri H.M."/>
            <person name="Lee K.H."/>
            <person name="Carty H.A."/>
            <person name="Scanlan D."/>
            <person name="Heinzen R.A."/>
            <person name="Thompson H.A."/>
            <person name="Samuel J.E."/>
            <person name="Fraser C.M."/>
            <person name="Heidelberg J.F."/>
        </authorList>
    </citation>
    <scope>NUCLEOTIDE SEQUENCE [LARGE SCALE GENOMIC DNA]</scope>
    <source>
        <strain>RSA 493 / Nine Mile phase I</strain>
    </source>
</reference>
<dbReference type="EC" id="2.5.1.61" evidence="1"/>
<dbReference type="EMBL" id="AE016828">
    <property type="protein sequence ID" value="AAO91558.1"/>
    <property type="molecule type" value="Genomic_DNA"/>
</dbReference>
<dbReference type="RefSeq" id="NP_821044.1">
    <property type="nucleotide sequence ID" value="NC_002971.4"/>
</dbReference>
<dbReference type="RefSeq" id="WP_010958635.1">
    <property type="nucleotide sequence ID" value="NZ_CCYB01000066.1"/>
</dbReference>
<dbReference type="SMR" id="Q83A37"/>
<dbReference type="STRING" id="227377.CBU_2074"/>
<dbReference type="EnsemblBacteria" id="AAO91558">
    <property type="protein sequence ID" value="AAO91558"/>
    <property type="gene ID" value="CBU_2074"/>
</dbReference>
<dbReference type="GeneID" id="1209987"/>
<dbReference type="KEGG" id="cbu:CBU_2074"/>
<dbReference type="PATRIC" id="fig|227377.7.peg.2064"/>
<dbReference type="eggNOG" id="COG0181">
    <property type="taxonomic scope" value="Bacteria"/>
</dbReference>
<dbReference type="HOGENOM" id="CLU_019704_1_0_6"/>
<dbReference type="OrthoDB" id="9810298at2"/>
<dbReference type="UniPathway" id="UPA00251">
    <property type="reaction ID" value="UER00319"/>
</dbReference>
<dbReference type="Proteomes" id="UP000002671">
    <property type="component" value="Chromosome"/>
</dbReference>
<dbReference type="GO" id="GO:0005737">
    <property type="term" value="C:cytoplasm"/>
    <property type="evidence" value="ECO:0000318"/>
    <property type="project" value="GO_Central"/>
</dbReference>
<dbReference type="GO" id="GO:0004418">
    <property type="term" value="F:hydroxymethylbilane synthase activity"/>
    <property type="evidence" value="ECO:0000318"/>
    <property type="project" value="GO_Central"/>
</dbReference>
<dbReference type="GO" id="GO:0006783">
    <property type="term" value="P:heme biosynthetic process"/>
    <property type="evidence" value="ECO:0000318"/>
    <property type="project" value="GO_Central"/>
</dbReference>
<dbReference type="GO" id="GO:0006782">
    <property type="term" value="P:protoporphyrinogen IX biosynthetic process"/>
    <property type="evidence" value="ECO:0007669"/>
    <property type="project" value="UniProtKB-UniRule"/>
</dbReference>
<dbReference type="FunFam" id="3.40.190.10:FF:000005">
    <property type="entry name" value="Porphobilinogen deaminase"/>
    <property type="match status" value="1"/>
</dbReference>
<dbReference type="FunFam" id="3.40.190.10:FF:000086">
    <property type="entry name" value="Probable porphobilinogen deaminase"/>
    <property type="match status" value="1"/>
</dbReference>
<dbReference type="Gene3D" id="3.40.190.10">
    <property type="entry name" value="Periplasmic binding protein-like II"/>
    <property type="match status" value="2"/>
</dbReference>
<dbReference type="Gene3D" id="3.30.160.40">
    <property type="entry name" value="Porphobilinogen deaminase, C-terminal domain"/>
    <property type="match status" value="1"/>
</dbReference>
<dbReference type="HAMAP" id="MF_00260">
    <property type="entry name" value="Porphobil_deam"/>
    <property type="match status" value="1"/>
</dbReference>
<dbReference type="InterPro" id="IPR000860">
    <property type="entry name" value="HemC"/>
</dbReference>
<dbReference type="InterPro" id="IPR022419">
    <property type="entry name" value="Porphobilin_deaminase_cofac_BS"/>
</dbReference>
<dbReference type="InterPro" id="IPR022417">
    <property type="entry name" value="Porphobilin_deaminase_N"/>
</dbReference>
<dbReference type="InterPro" id="IPR022418">
    <property type="entry name" value="Porphobilinogen_deaminase_C"/>
</dbReference>
<dbReference type="InterPro" id="IPR036803">
    <property type="entry name" value="Porphobilinogen_deaminase_C_sf"/>
</dbReference>
<dbReference type="NCBIfam" id="TIGR00212">
    <property type="entry name" value="hemC"/>
    <property type="match status" value="1"/>
</dbReference>
<dbReference type="PANTHER" id="PTHR11557">
    <property type="entry name" value="PORPHOBILINOGEN DEAMINASE"/>
    <property type="match status" value="1"/>
</dbReference>
<dbReference type="PANTHER" id="PTHR11557:SF0">
    <property type="entry name" value="PORPHOBILINOGEN DEAMINASE"/>
    <property type="match status" value="1"/>
</dbReference>
<dbReference type="Pfam" id="PF01379">
    <property type="entry name" value="Porphobil_deam"/>
    <property type="match status" value="1"/>
</dbReference>
<dbReference type="Pfam" id="PF03900">
    <property type="entry name" value="Porphobil_deamC"/>
    <property type="match status" value="1"/>
</dbReference>
<dbReference type="PIRSF" id="PIRSF001438">
    <property type="entry name" value="4pyrrol_synth_OHMeBilane_synth"/>
    <property type="match status" value="1"/>
</dbReference>
<dbReference type="PRINTS" id="PR00151">
    <property type="entry name" value="PORPHBDMNASE"/>
</dbReference>
<dbReference type="SUPFAM" id="SSF53850">
    <property type="entry name" value="Periplasmic binding protein-like II"/>
    <property type="match status" value="1"/>
</dbReference>
<dbReference type="SUPFAM" id="SSF54782">
    <property type="entry name" value="Porphobilinogen deaminase (hydroxymethylbilane synthase), C-terminal domain"/>
    <property type="match status" value="1"/>
</dbReference>
<dbReference type="PROSITE" id="PS00533">
    <property type="entry name" value="PORPHOBILINOGEN_DEAM"/>
    <property type="match status" value="1"/>
</dbReference>
<accession>Q83A37</accession>
<feature type="chain" id="PRO_0000142931" description="Porphobilinogen deaminase">
    <location>
        <begin position="1"/>
        <end position="307"/>
    </location>
</feature>
<feature type="modified residue" description="S-(dipyrrolylmethanemethyl)cysteine" evidence="1">
    <location>
        <position position="241"/>
    </location>
</feature>
<sequence>MIKKRSILIVTRKSPLALWQAEFVKQQIENSHPHLACQILGCTTQGDRLTTEKLVDSGGKDLFVKDLQKALLNRDADIAVHSIKDMSACDGPELMVGAFIRREDPRDVLIVKGELSTLPPHAVIGTSSPRRQCQLKKFQPGCKIKEIRGNVGTRLAKLDAGHYEAIVLAAAGLKRLGLENRIHYYFDPHEFIPAIGQGAIGVECRSDDHEMQTLLKSLDHRETRLCVTAERAVNEKLGGDCFTPIAAHAIIKNDQLSLFAMLGKIDGRVIIRATEIGNSEEAKRIGFKVASQLLEQGGDSLLRELKQ</sequence>
<organism>
    <name type="scientific">Coxiella burnetii (strain RSA 493 / Nine Mile phase I)</name>
    <dbReference type="NCBI Taxonomy" id="227377"/>
    <lineage>
        <taxon>Bacteria</taxon>
        <taxon>Pseudomonadati</taxon>
        <taxon>Pseudomonadota</taxon>
        <taxon>Gammaproteobacteria</taxon>
        <taxon>Legionellales</taxon>
        <taxon>Coxiellaceae</taxon>
        <taxon>Coxiella</taxon>
    </lineage>
</organism>
<gene>
    <name evidence="1" type="primary">hemC</name>
    <name type="ordered locus">CBU_2074</name>
</gene>
<evidence type="ECO:0000255" key="1">
    <source>
        <dbReference type="HAMAP-Rule" id="MF_00260"/>
    </source>
</evidence>
<name>HEM3_COXBU</name>
<keyword id="KW-0627">Porphyrin biosynthesis</keyword>
<keyword id="KW-1185">Reference proteome</keyword>
<keyword id="KW-0808">Transferase</keyword>
<proteinExistence type="inferred from homology"/>
<protein>
    <recommendedName>
        <fullName evidence="1">Porphobilinogen deaminase</fullName>
        <shortName evidence="1">PBG</shortName>
        <ecNumber evidence="1">2.5.1.61</ecNumber>
    </recommendedName>
    <alternativeName>
        <fullName evidence="1">Hydroxymethylbilane synthase</fullName>
        <shortName evidence="1">HMBS</shortName>
    </alternativeName>
    <alternativeName>
        <fullName evidence="1">Pre-uroporphyrinogen synthase</fullName>
    </alternativeName>
</protein>